<accession>Q8A3X5</accession>
<name>SYR_BACTN</name>
<gene>
    <name evidence="1" type="primary">argS</name>
    <name type="ordered locus">BT_2829</name>
</gene>
<comment type="catalytic activity">
    <reaction evidence="1">
        <text>tRNA(Arg) + L-arginine + ATP = L-arginyl-tRNA(Arg) + AMP + diphosphate</text>
        <dbReference type="Rhea" id="RHEA:20301"/>
        <dbReference type="Rhea" id="RHEA-COMP:9658"/>
        <dbReference type="Rhea" id="RHEA-COMP:9673"/>
        <dbReference type="ChEBI" id="CHEBI:30616"/>
        <dbReference type="ChEBI" id="CHEBI:32682"/>
        <dbReference type="ChEBI" id="CHEBI:33019"/>
        <dbReference type="ChEBI" id="CHEBI:78442"/>
        <dbReference type="ChEBI" id="CHEBI:78513"/>
        <dbReference type="ChEBI" id="CHEBI:456215"/>
        <dbReference type="EC" id="6.1.1.19"/>
    </reaction>
</comment>
<comment type="subunit">
    <text evidence="1">Monomer.</text>
</comment>
<comment type="subcellular location">
    <subcellularLocation>
        <location evidence="1">Cytoplasm</location>
    </subcellularLocation>
</comment>
<comment type="similarity">
    <text evidence="1">Belongs to the class-I aminoacyl-tRNA synthetase family.</text>
</comment>
<proteinExistence type="inferred from homology"/>
<keyword id="KW-0030">Aminoacyl-tRNA synthetase</keyword>
<keyword id="KW-0067">ATP-binding</keyword>
<keyword id="KW-0963">Cytoplasm</keyword>
<keyword id="KW-0436">Ligase</keyword>
<keyword id="KW-0547">Nucleotide-binding</keyword>
<keyword id="KW-0648">Protein biosynthesis</keyword>
<keyword id="KW-1185">Reference proteome</keyword>
<evidence type="ECO:0000255" key="1">
    <source>
        <dbReference type="HAMAP-Rule" id="MF_00123"/>
    </source>
</evidence>
<dbReference type="EC" id="6.1.1.19" evidence="1"/>
<dbReference type="EMBL" id="AE015928">
    <property type="protein sequence ID" value="AAO77935.1"/>
    <property type="molecule type" value="Genomic_DNA"/>
</dbReference>
<dbReference type="RefSeq" id="NP_811741.1">
    <property type="nucleotide sequence ID" value="NC_004663.1"/>
</dbReference>
<dbReference type="RefSeq" id="WP_008765307.1">
    <property type="nucleotide sequence ID" value="NC_004663.1"/>
</dbReference>
<dbReference type="SMR" id="Q8A3X5"/>
<dbReference type="FunCoup" id="Q8A3X5">
    <property type="interactions" value="504"/>
</dbReference>
<dbReference type="STRING" id="226186.BT_2829"/>
<dbReference type="PaxDb" id="226186-BT_2829"/>
<dbReference type="EnsemblBacteria" id="AAO77935">
    <property type="protein sequence ID" value="AAO77935"/>
    <property type="gene ID" value="BT_2829"/>
</dbReference>
<dbReference type="GeneID" id="60924010"/>
<dbReference type="KEGG" id="bth:BT_2829"/>
<dbReference type="PATRIC" id="fig|226186.12.peg.2876"/>
<dbReference type="eggNOG" id="COG0018">
    <property type="taxonomic scope" value="Bacteria"/>
</dbReference>
<dbReference type="HOGENOM" id="CLU_006406_6_1_10"/>
<dbReference type="InParanoid" id="Q8A3X5"/>
<dbReference type="OrthoDB" id="9805987at2"/>
<dbReference type="Proteomes" id="UP000001414">
    <property type="component" value="Chromosome"/>
</dbReference>
<dbReference type="GO" id="GO:0005737">
    <property type="term" value="C:cytoplasm"/>
    <property type="evidence" value="ECO:0007669"/>
    <property type="project" value="UniProtKB-SubCell"/>
</dbReference>
<dbReference type="GO" id="GO:0004814">
    <property type="term" value="F:arginine-tRNA ligase activity"/>
    <property type="evidence" value="ECO:0000318"/>
    <property type="project" value="GO_Central"/>
</dbReference>
<dbReference type="GO" id="GO:0005524">
    <property type="term" value="F:ATP binding"/>
    <property type="evidence" value="ECO:0007669"/>
    <property type="project" value="UniProtKB-UniRule"/>
</dbReference>
<dbReference type="GO" id="GO:0006420">
    <property type="term" value="P:arginyl-tRNA aminoacylation"/>
    <property type="evidence" value="ECO:0000318"/>
    <property type="project" value="GO_Central"/>
</dbReference>
<dbReference type="FunFam" id="3.40.50.620:FF:000125">
    <property type="entry name" value="Arginine--tRNA ligase"/>
    <property type="match status" value="1"/>
</dbReference>
<dbReference type="Gene3D" id="3.30.1360.70">
    <property type="entry name" value="Arginyl tRNA synthetase N-terminal domain"/>
    <property type="match status" value="1"/>
</dbReference>
<dbReference type="Gene3D" id="3.40.50.620">
    <property type="entry name" value="HUPs"/>
    <property type="match status" value="1"/>
</dbReference>
<dbReference type="Gene3D" id="1.10.730.10">
    <property type="entry name" value="Isoleucyl-tRNA Synthetase, Domain 1"/>
    <property type="match status" value="1"/>
</dbReference>
<dbReference type="HAMAP" id="MF_00123">
    <property type="entry name" value="Arg_tRNA_synth"/>
    <property type="match status" value="1"/>
</dbReference>
<dbReference type="InterPro" id="IPR001412">
    <property type="entry name" value="aa-tRNA-synth_I_CS"/>
</dbReference>
<dbReference type="InterPro" id="IPR001278">
    <property type="entry name" value="Arg-tRNA-ligase"/>
</dbReference>
<dbReference type="InterPro" id="IPR005148">
    <property type="entry name" value="Arg-tRNA-synth_N"/>
</dbReference>
<dbReference type="InterPro" id="IPR036695">
    <property type="entry name" value="Arg-tRNA-synth_N_sf"/>
</dbReference>
<dbReference type="InterPro" id="IPR035684">
    <property type="entry name" value="ArgRS_core"/>
</dbReference>
<dbReference type="InterPro" id="IPR008909">
    <property type="entry name" value="DALR_anticod-bd"/>
</dbReference>
<dbReference type="InterPro" id="IPR014729">
    <property type="entry name" value="Rossmann-like_a/b/a_fold"/>
</dbReference>
<dbReference type="InterPro" id="IPR009080">
    <property type="entry name" value="tRNAsynth_Ia_anticodon-bd"/>
</dbReference>
<dbReference type="NCBIfam" id="TIGR00456">
    <property type="entry name" value="argS"/>
    <property type="match status" value="1"/>
</dbReference>
<dbReference type="PANTHER" id="PTHR11956:SF5">
    <property type="entry name" value="ARGININE--TRNA LIGASE, CYTOPLASMIC"/>
    <property type="match status" value="1"/>
</dbReference>
<dbReference type="PANTHER" id="PTHR11956">
    <property type="entry name" value="ARGINYL-TRNA SYNTHETASE"/>
    <property type="match status" value="1"/>
</dbReference>
<dbReference type="Pfam" id="PF03485">
    <property type="entry name" value="Arg_tRNA_synt_N"/>
    <property type="match status" value="1"/>
</dbReference>
<dbReference type="Pfam" id="PF05746">
    <property type="entry name" value="DALR_1"/>
    <property type="match status" value="1"/>
</dbReference>
<dbReference type="Pfam" id="PF00750">
    <property type="entry name" value="tRNA-synt_1d"/>
    <property type="match status" value="1"/>
</dbReference>
<dbReference type="PRINTS" id="PR01038">
    <property type="entry name" value="TRNASYNTHARG"/>
</dbReference>
<dbReference type="SMART" id="SM01016">
    <property type="entry name" value="Arg_tRNA_synt_N"/>
    <property type="match status" value="1"/>
</dbReference>
<dbReference type="SMART" id="SM00836">
    <property type="entry name" value="DALR_1"/>
    <property type="match status" value="1"/>
</dbReference>
<dbReference type="SUPFAM" id="SSF47323">
    <property type="entry name" value="Anticodon-binding domain of a subclass of class I aminoacyl-tRNA synthetases"/>
    <property type="match status" value="1"/>
</dbReference>
<dbReference type="SUPFAM" id="SSF55190">
    <property type="entry name" value="Arginyl-tRNA synthetase (ArgRS), N-terminal 'additional' domain"/>
    <property type="match status" value="1"/>
</dbReference>
<dbReference type="SUPFAM" id="SSF52374">
    <property type="entry name" value="Nucleotidylyl transferase"/>
    <property type="match status" value="1"/>
</dbReference>
<dbReference type="PROSITE" id="PS00178">
    <property type="entry name" value="AA_TRNA_LIGASE_I"/>
    <property type="match status" value="1"/>
</dbReference>
<feature type="chain" id="PRO_0000151531" description="Arginine--tRNA ligase">
    <location>
        <begin position="1"/>
        <end position="597"/>
    </location>
</feature>
<feature type="short sequence motif" description="'HIGH' region">
    <location>
        <begin position="125"/>
        <end position="135"/>
    </location>
</feature>
<reference key="1">
    <citation type="journal article" date="2003" name="Science">
        <title>A genomic view of the human-Bacteroides thetaiotaomicron symbiosis.</title>
        <authorList>
            <person name="Xu J."/>
            <person name="Bjursell M.K."/>
            <person name="Himrod J."/>
            <person name="Deng S."/>
            <person name="Carmichael L.K."/>
            <person name="Chiang H.C."/>
            <person name="Hooper L.V."/>
            <person name="Gordon J.I."/>
        </authorList>
    </citation>
    <scope>NUCLEOTIDE SEQUENCE [LARGE SCALE GENOMIC DNA]</scope>
    <source>
        <strain>ATCC 29148 / DSM 2079 / JCM 5827 / CCUG 10774 / NCTC 10582 / VPI-5482 / E50</strain>
    </source>
</reference>
<protein>
    <recommendedName>
        <fullName evidence="1">Arginine--tRNA ligase</fullName>
        <ecNumber evidence="1">6.1.1.19</ecNumber>
    </recommendedName>
    <alternativeName>
        <fullName evidence="1">Arginyl-tRNA synthetase</fullName>
        <shortName evidence="1">ArgRS</shortName>
    </alternativeName>
</protein>
<sequence length="597" mass="66954">MKIEDKLVASVINGLKALYGQEVPEKMVQLQKTKKEFEGHLTLVVFPFLKMSRKGPEQTAQEIGEYLKANEPAVAAFNVIKGFLNLTIASATWIELLNEIQSDEEYGLVKATETSPLVMIEYSSPNTNKPLHLGHVRNNLLGNALANIVAANGNRVVKTNIVNDRGIHICKSMLAWKKYGNGETPESTGKKGDHLVGDYYVSFDKHYKAELAELMEKGMTKEEAEAASPLMQEAREMLVKWEAGDPEVRALWEMMNNWVYAGFDETYRKMGVGFDKIYYESNTYLEGKEKVMEGLEKGFFFKKEDGSVWVDLTAEGLDHKLLLRGDGTSVYMTQDIGTAKLRFADYPIDKMIYVVGNEQNYHFQVLSILLDKLGFEWGKGLVHFSYGMVELPEGKMKSREGTVVDADDLMEEMVSTAKETSQELGKLDGLTQEEADDIARIVGLGALKYFILKVDARKNMTFNPKESIDFNGNTGPFIQYTYARIQSVLRKAAESGIVIPEQIPAGIELSEKEEGLIQLVADFAAVVKQAGEDYSPSIIANYTYDLVKEYNQFYHDFSILREENEAVKVFRIALSANVAKVVRLGMGLLGIEVPSRM</sequence>
<organism>
    <name type="scientific">Bacteroides thetaiotaomicron (strain ATCC 29148 / DSM 2079 / JCM 5827 / CCUG 10774 / NCTC 10582 / VPI-5482 / E50)</name>
    <dbReference type="NCBI Taxonomy" id="226186"/>
    <lineage>
        <taxon>Bacteria</taxon>
        <taxon>Pseudomonadati</taxon>
        <taxon>Bacteroidota</taxon>
        <taxon>Bacteroidia</taxon>
        <taxon>Bacteroidales</taxon>
        <taxon>Bacteroidaceae</taxon>
        <taxon>Bacteroides</taxon>
    </lineage>
</organism>